<organism>
    <name type="scientific">Pseudomonas aeruginosa (strain ATCC 15692 / DSM 22644 / CIP 104116 / JCM 14847 / LMG 12228 / 1C / PRS 101 / PAO1)</name>
    <dbReference type="NCBI Taxonomy" id="208964"/>
    <lineage>
        <taxon>Bacteria</taxon>
        <taxon>Pseudomonadati</taxon>
        <taxon>Pseudomonadota</taxon>
        <taxon>Gammaproteobacteria</taxon>
        <taxon>Pseudomonadales</taxon>
        <taxon>Pseudomonadaceae</taxon>
        <taxon>Pseudomonas</taxon>
    </lineage>
</organism>
<comment type="function">
    <text evidence="4">Catalyzes the condensation of (S)-aspartate-beta-semialdehyde [(S)-ASA] and pyruvate to 4-hydroxy-tetrahydrodipicolinate (HTPA).</text>
</comment>
<comment type="catalytic activity">
    <reaction evidence="1">
        <text>L-aspartate 4-semialdehyde + pyruvate = (2S,4S)-4-hydroxy-2,3,4,5-tetrahydrodipicolinate + H2O + H(+)</text>
        <dbReference type="Rhea" id="RHEA:34171"/>
        <dbReference type="ChEBI" id="CHEBI:15361"/>
        <dbReference type="ChEBI" id="CHEBI:15377"/>
        <dbReference type="ChEBI" id="CHEBI:15378"/>
        <dbReference type="ChEBI" id="CHEBI:67139"/>
        <dbReference type="ChEBI" id="CHEBI:537519"/>
        <dbReference type="EC" id="4.3.3.7"/>
    </reaction>
</comment>
<comment type="biophysicochemical properties">
    <kinetics>
        <KM evidence="2">0.9 mM for pyruvate</KM>
        <KM evidence="2">0.17 mM for L-aspartate-4-semialdehyde</KM>
        <Vmax evidence="2">0.03 mmol/min/ug enzyme</Vmax>
    </kinetics>
    <phDependence>
        <text evidence="2">Optimum pH is 8.0. At pH 9.0 or above, only 30% activity is observed.</text>
    </phDependence>
    <temperatureDependence>
        <text evidence="2">Optimum temperature is 37 degrees Celsius. The activity decreases slowly when temperatures are reduced from 37 degrees Celsius while the drop in activity is relatively more rapid when temperatures are raised above 37 degrees Celsius. In this case, the activity reduces to almost 30% at 52 degrees Celsius.</text>
    </temperatureDependence>
</comment>
<comment type="pathway">
    <text evidence="1">Amino-acid biosynthesis; L-lysine biosynthesis via DAP pathway; (S)-tetrahydrodipicolinate from L-aspartate: step 3/4.</text>
</comment>
<comment type="subunit">
    <text evidence="1 2">Homodimer.</text>
</comment>
<comment type="subcellular location">
    <subcellularLocation>
        <location evidence="1">Cytoplasm</location>
    </subcellularLocation>
</comment>
<comment type="similarity">
    <text evidence="1">Belongs to the DapA family.</text>
</comment>
<comment type="caution">
    <text evidence="3">Was originally thought to be a dihydrodipicolinate synthase (DHDPS), catalyzing the condensation of (S)-aspartate-beta-semialdehyde [(S)-ASA] and pyruvate to dihydrodipicolinate (DHDP). However, it was shown in E.coli that the product of the enzymatic reaction is not dihydrodipicolinate but in fact (4S)-4-hydroxy-2,3,4,5-tetrahydro-(2S)-dipicolinic acid (HTPA), and that the consecutive dehydration reaction leading to DHDP is not spontaneous but catalyzed by DapB.</text>
</comment>
<dbReference type="EC" id="4.3.3.7" evidence="1"/>
<dbReference type="EMBL" id="GU166748">
    <property type="protein sequence ID" value="ACZ37227.1"/>
    <property type="molecule type" value="Genomic_DNA"/>
</dbReference>
<dbReference type="EMBL" id="AE004091">
    <property type="protein sequence ID" value="AAG04399.1"/>
    <property type="molecule type" value="Genomic_DNA"/>
</dbReference>
<dbReference type="PIR" id="C83520">
    <property type="entry name" value="C83520"/>
</dbReference>
<dbReference type="RefSeq" id="NP_249701.1">
    <property type="nucleotide sequence ID" value="NC_002516.2"/>
</dbReference>
<dbReference type="RefSeq" id="WP_003086270.1">
    <property type="nucleotide sequence ID" value="NZ_QZGE01000006.1"/>
</dbReference>
<dbReference type="PDB" id="3NOE">
    <property type="method" value="X-ray"/>
    <property type="resolution" value="2.95 A"/>
    <property type="chains" value="A/B=1-292"/>
</dbReference>
<dbReference type="PDB" id="3PS7">
    <property type="method" value="X-ray"/>
    <property type="resolution" value="2.85 A"/>
    <property type="chains" value="A/B=1-292"/>
</dbReference>
<dbReference type="PDB" id="3PUO">
    <property type="method" value="X-ray"/>
    <property type="resolution" value="2.65 A"/>
    <property type="chains" value="A/B=1-292"/>
</dbReference>
<dbReference type="PDB" id="3QZE">
    <property type="method" value="X-ray"/>
    <property type="resolution" value="1.59 A"/>
    <property type="chains" value="A/B/C/D=1-292"/>
</dbReference>
<dbReference type="PDB" id="3S8H">
    <property type="method" value="X-ray"/>
    <property type="resolution" value="2.70 A"/>
    <property type="chains" value="A/B=1-292"/>
</dbReference>
<dbReference type="PDB" id="6P90">
    <property type="method" value="X-ray"/>
    <property type="resolution" value="1.90 A"/>
    <property type="chains" value="A/B=1-292"/>
</dbReference>
<dbReference type="PDBsum" id="3NOE"/>
<dbReference type="PDBsum" id="3PS7"/>
<dbReference type="PDBsum" id="3PUO"/>
<dbReference type="PDBsum" id="3QZE"/>
<dbReference type="PDBsum" id="3S8H"/>
<dbReference type="PDBsum" id="6P90"/>
<dbReference type="SMR" id="Q9I4W3"/>
<dbReference type="FunCoup" id="Q9I4W3">
    <property type="interactions" value="612"/>
</dbReference>
<dbReference type="STRING" id="208964.PA1010"/>
<dbReference type="PaxDb" id="208964-PA1010"/>
<dbReference type="GeneID" id="879525"/>
<dbReference type="KEGG" id="pae:PA1010"/>
<dbReference type="PATRIC" id="fig|208964.12.peg.1042"/>
<dbReference type="PseudoCAP" id="PA1010"/>
<dbReference type="HOGENOM" id="CLU_049343_7_1_6"/>
<dbReference type="InParanoid" id="Q9I4W3"/>
<dbReference type="OrthoDB" id="9782828at2"/>
<dbReference type="PhylomeDB" id="Q9I4W3"/>
<dbReference type="BioCyc" id="PAER208964:G1FZ6-1029-MONOMER"/>
<dbReference type="BRENDA" id="4.3.3.7">
    <property type="organism ID" value="5087"/>
</dbReference>
<dbReference type="UniPathway" id="UPA00034">
    <property type="reaction ID" value="UER00017"/>
</dbReference>
<dbReference type="EvolutionaryTrace" id="Q9I4W3"/>
<dbReference type="Proteomes" id="UP000002438">
    <property type="component" value="Chromosome"/>
</dbReference>
<dbReference type="GO" id="GO:0005829">
    <property type="term" value="C:cytosol"/>
    <property type="evidence" value="ECO:0000318"/>
    <property type="project" value="GO_Central"/>
</dbReference>
<dbReference type="GO" id="GO:0008840">
    <property type="term" value="F:4-hydroxy-tetrahydrodipicolinate synthase activity"/>
    <property type="evidence" value="ECO:0000318"/>
    <property type="project" value="GO_Central"/>
</dbReference>
<dbReference type="GO" id="GO:0019877">
    <property type="term" value="P:diaminopimelate biosynthetic process"/>
    <property type="evidence" value="ECO:0007669"/>
    <property type="project" value="UniProtKB-UniRule"/>
</dbReference>
<dbReference type="GO" id="GO:0009089">
    <property type="term" value="P:lysine biosynthetic process via diaminopimelate"/>
    <property type="evidence" value="ECO:0007669"/>
    <property type="project" value="UniProtKB-UniRule"/>
</dbReference>
<dbReference type="CDD" id="cd00950">
    <property type="entry name" value="DHDPS"/>
    <property type="match status" value="1"/>
</dbReference>
<dbReference type="Gene3D" id="3.20.20.70">
    <property type="entry name" value="Aldolase class I"/>
    <property type="match status" value="1"/>
</dbReference>
<dbReference type="HAMAP" id="MF_00418">
    <property type="entry name" value="DapA"/>
    <property type="match status" value="1"/>
</dbReference>
<dbReference type="InterPro" id="IPR013785">
    <property type="entry name" value="Aldolase_TIM"/>
</dbReference>
<dbReference type="InterPro" id="IPR005263">
    <property type="entry name" value="DapA"/>
</dbReference>
<dbReference type="InterPro" id="IPR002220">
    <property type="entry name" value="DapA-like"/>
</dbReference>
<dbReference type="InterPro" id="IPR020625">
    <property type="entry name" value="Schiff_base-form_aldolases_AS"/>
</dbReference>
<dbReference type="InterPro" id="IPR020624">
    <property type="entry name" value="Schiff_base-form_aldolases_CS"/>
</dbReference>
<dbReference type="NCBIfam" id="TIGR00674">
    <property type="entry name" value="dapA"/>
    <property type="match status" value="1"/>
</dbReference>
<dbReference type="PANTHER" id="PTHR12128:SF66">
    <property type="entry name" value="4-HYDROXY-2-OXOGLUTARATE ALDOLASE, MITOCHONDRIAL"/>
    <property type="match status" value="1"/>
</dbReference>
<dbReference type="PANTHER" id="PTHR12128">
    <property type="entry name" value="DIHYDRODIPICOLINATE SYNTHASE"/>
    <property type="match status" value="1"/>
</dbReference>
<dbReference type="Pfam" id="PF00701">
    <property type="entry name" value="DHDPS"/>
    <property type="match status" value="1"/>
</dbReference>
<dbReference type="PIRSF" id="PIRSF001365">
    <property type="entry name" value="DHDPS"/>
    <property type="match status" value="1"/>
</dbReference>
<dbReference type="PRINTS" id="PR00146">
    <property type="entry name" value="DHPICSNTHASE"/>
</dbReference>
<dbReference type="SMART" id="SM01130">
    <property type="entry name" value="DHDPS"/>
    <property type="match status" value="1"/>
</dbReference>
<dbReference type="SUPFAM" id="SSF51569">
    <property type="entry name" value="Aldolase"/>
    <property type="match status" value="1"/>
</dbReference>
<dbReference type="PROSITE" id="PS00665">
    <property type="entry name" value="DHDPS_1"/>
    <property type="match status" value="1"/>
</dbReference>
<dbReference type="PROSITE" id="PS00666">
    <property type="entry name" value="DHDPS_2"/>
    <property type="match status" value="1"/>
</dbReference>
<sequence length="292" mass="31449">MIAGSMVALVTPFDAQGRLDWDSLAKLVDFHLQEGTNAIVAVGTTGESATLDVEEHIQVIRRVVDQVKGRIPVIAGTGANSTREAVALTEAAKSGGADACLLVTPYYNKPTQEGMYQHFRHIAEAVAIPQILYNVPGRTSCDMLPETVERLSKVPNIIGIKEATGDLQRAKEVIERVGKDFLVYSGDDATAVELMLLGGKGNISVTANVAPRAMSDLCAAAMRGDAAAARAINDRLMPLHKALFIESNPIPVKWALHEMGLIPEGIRLPLTWLSPRCHEPLRQAMRQTGVLA</sequence>
<gene>
    <name evidence="1" type="primary">dapA</name>
    <name type="ordered locus">PA1010</name>
</gene>
<keyword id="KW-0002">3D-structure</keyword>
<keyword id="KW-0028">Amino-acid biosynthesis</keyword>
<keyword id="KW-0963">Cytoplasm</keyword>
<keyword id="KW-0220">Diaminopimelate biosynthesis</keyword>
<keyword id="KW-0456">Lyase</keyword>
<keyword id="KW-0457">Lysine biosynthesis</keyword>
<keyword id="KW-1185">Reference proteome</keyword>
<keyword id="KW-0704">Schiff base</keyword>
<name>DAPA_PSEAE</name>
<feature type="chain" id="PRO_0000103138" description="4-hydroxy-tetrahydrodipicolinate synthase">
    <location>
        <begin position="1"/>
        <end position="292"/>
    </location>
</feature>
<feature type="active site" description="Proton donor/acceptor" evidence="1">
    <location>
        <position position="133"/>
    </location>
</feature>
<feature type="active site" description="Schiff-base intermediate with substrate" evidence="1">
    <location>
        <position position="161"/>
    </location>
</feature>
<feature type="binding site" evidence="1">
    <location>
        <position position="45"/>
    </location>
    <ligand>
        <name>pyruvate</name>
        <dbReference type="ChEBI" id="CHEBI:15361"/>
    </ligand>
</feature>
<feature type="binding site" evidence="1">
    <location>
        <position position="203"/>
    </location>
    <ligand>
        <name>pyruvate</name>
        <dbReference type="ChEBI" id="CHEBI:15361"/>
    </ligand>
</feature>
<feature type="site" description="Part of a proton relay during catalysis" evidence="1">
    <location>
        <position position="44"/>
    </location>
</feature>
<feature type="site" description="Part of a proton relay during catalysis" evidence="1">
    <location>
        <position position="107"/>
    </location>
</feature>
<feature type="sequence conflict" description="In Ref. 1; ACZ37227." evidence="3" ref="1">
    <original>D</original>
    <variation>E</variation>
    <location>
        <position position="234"/>
    </location>
</feature>
<feature type="sequence conflict" description="In Ref. 1; ACZ37227." evidence="3" ref="1">
    <original>R</original>
    <variation>H</variation>
    <location>
        <position position="276"/>
    </location>
</feature>
<feature type="strand" evidence="6">
    <location>
        <begin position="4"/>
        <end position="8"/>
    </location>
</feature>
<feature type="helix" evidence="6">
    <location>
        <begin position="21"/>
        <end position="34"/>
    </location>
</feature>
<feature type="strand" evidence="6">
    <location>
        <begin position="38"/>
        <end position="43"/>
    </location>
</feature>
<feature type="helix" evidence="6">
    <location>
        <begin position="44"/>
        <end position="46"/>
    </location>
</feature>
<feature type="helix" evidence="6">
    <location>
        <begin position="48"/>
        <end position="50"/>
    </location>
</feature>
<feature type="helix" evidence="6">
    <location>
        <begin position="53"/>
        <end position="67"/>
    </location>
</feature>
<feature type="strand" evidence="6">
    <location>
        <begin position="73"/>
        <end position="76"/>
    </location>
</feature>
<feature type="helix" evidence="6">
    <location>
        <begin position="82"/>
        <end position="94"/>
    </location>
</feature>
<feature type="strand" evidence="6">
    <location>
        <begin position="98"/>
        <end position="103"/>
    </location>
</feature>
<feature type="turn" evidence="5">
    <location>
        <begin position="106"/>
        <end position="108"/>
    </location>
</feature>
<feature type="helix" evidence="6">
    <location>
        <begin position="112"/>
        <end position="125"/>
    </location>
</feature>
<feature type="strand" evidence="6">
    <location>
        <begin position="130"/>
        <end position="134"/>
    </location>
</feature>
<feature type="helix" evidence="6">
    <location>
        <begin position="136"/>
        <end position="139"/>
    </location>
</feature>
<feature type="helix" evidence="6">
    <location>
        <begin position="145"/>
        <end position="152"/>
    </location>
</feature>
<feature type="strand" evidence="6">
    <location>
        <begin position="157"/>
        <end position="162"/>
    </location>
</feature>
<feature type="helix" evidence="6">
    <location>
        <begin position="167"/>
        <end position="176"/>
    </location>
</feature>
<feature type="strand" evidence="6">
    <location>
        <begin position="181"/>
        <end position="186"/>
    </location>
</feature>
<feature type="helix" evidence="6">
    <location>
        <begin position="188"/>
        <end position="190"/>
    </location>
</feature>
<feature type="helix" evidence="6">
    <location>
        <begin position="191"/>
        <end position="196"/>
    </location>
</feature>
<feature type="strand" evidence="6">
    <location>
        <begin position="201"/>
        <end position="205"/>
    </location>
</feature>
<feature type="helix" evidence="6">
    <location>
        <begin position="206"/>
        <end position="208"/>
    </location>
</feature>
<feature type="helix" evidence="6">
    <location>
        <begin position="211"/>
        <end position="222"/>
    </location>
</feature>
<feature type="helix" evidence="6">
    <location>
        <begin position="226"/>
        <end position="242"/>
    </location>
</feature>
<feature type="strand" evidence="6">
    <location>
        <begin position="245"/>
        <end position="247"/>
    </location>
</feature>
<feature type="helix" evidence="6">
    <location>
        <begin position="250"/>
        <end position="258"/>
    </location>
</feature>
<feature type="helix" evidence="6">
    <location>
        <begin position="275"/>
        <end position="277"/>
    </location>
</feature>
<feature type="helix" evidence="6">
    <location>
        <begin position="278"/>
        <end position="287"/>
    </location>
</feature>
<protein>
    <recommendedName>
        <fullName evidence="1">4-hydroxy-tetrahydrodipicolinate synthase</fullName>
        <shortName evidence="1">HTPA synthase</shortName>
        <ecNumber evidence="1">4.3.3.7</ecNumber>
    </recommendedName>
</protein>
<evidence type="ECO:0000255" key="1">
    <source>
        <dbReference type="HAMAP-Rule" id="MF_00418"/>
    </source>
</evidence>
<evidence type="ECO:0000269" key="2">
    <source>
    </source>
</evidence>
<evidence type="ECO:0000305" key="3"/>
<evidence type="ECO:0000305" key="4">
    <source>
    </source>
</evidence>
<evidence type="ECO:0007829" key="5">
    <source>
        <dbReference type="PDB" id="3PS7"/>
    </source>
</evidence>
<evidence type="ECO:0007829" key="6">
    <source>
        <dbReference type="PDB" id="3QZE"/>
    </source>
</evidence>
<accession>Q9I4W3</accession>
<accession>D1MH64</accession>
<proteinExistence type="evidence at protein level"/>
<reference key="1">
    <citation type="journal article" date="2011" name="Int. J. Biol. Macromol.">
        <title>Biochemical studies and crystal structure determination of dihydrodipicolinate synthase from Pseudomonas aeruginosa.</title>
        <authorList>
            <person name="Kaur N."/>
            <person name="Gautam A."/>
            <person name="Kumar S."/>
            <person name="Singh A."/>
            <person name="Singh N."/>
            <person name="Sharma S."/>
            <person name="Sharma R."/>
            <person name="Tewari R."/>
            <person name="Singh T.P."/>
        </authorList>
    </citation>
    <scope>NUCLEOTIDE SEQUENCE [GENOMIC DNA]</scope>
    <scope>X-RAY CRYSTALLOGRAPHY (2.65 ANGSTROMS) OF APOENZYME AND IN COMPLEX WITH (S)-LYSINE</scope>
    <scope>FUNCTION</scope>
    <scope>BIOPHYSICOCHEMICAL PROPERTIES</scope>
    <scope>SUBUNIT</scope>
    <source>
        <strain>ATCC 15692 / DSM 22644 / CIP 104116 / JCM 14847 / LMG 12228 / 1C / PRS 101 / PAO1</strain>
    </source>
</reference>
<reference key="2">
    <citation type="journal article" date="2000" name="Nature">
        <title>Complete genome sequence of Pseudomonas aeruginosa PAO1, an opportunistic pathogen.</title>
        <authorList>
            <person name="Stover C.K."/>
            <person name="Pham X.-Q.T."/>
            <person name="Erwin A.L."/>
            <person name="Mizoguchi S.D."/>
            <person name="Warrener P."/>
            <person name="Hickey M.J."/>
            <person name="Brinkman F.S.L."/>
            <person name="Hufnagle W.O."/>
            <person name="Kowalik D.J."/>
            <person name="Lagrou M."/>
            <person name="Garber R.L."/>
            <person name="Goltry L."/>
            <person name="Tolentino E."/>
            <person name="Westbrock-Wadman S."/>
            <person name="Yuan Y."/>
            <person name="Brody L.L."/>
            <person name="Coulter S.N."/>
            <person name="Folger K.R."/>
            <person name="Kas A."/>
            <person name="Larbig K."/>
            <person name="Lim R.M."/>
            <person name="Smith K.A."/>
            <person name="Spencer D.H."/>
            <person name="Wong G.K.-S."/>
            <person name="Wu Z."/>
            <person name="Paulsen I.T."/>
            <person name="Reizer J."/>
            <person name="Saier M.H. Jr."/>
            <person name="Hancock R.E.W."/>
            <person name="Lory S."/>
            <person name="Olson M.V."/>
        </authorList>
    </citation>
    <scope>NUCLEOTIDE SEQUENCE [LARGE SCALE GENOMIC DNA]</scope>
    <source>
        <strain>ATCC 15692 / DSM 22644 / CIP 104116 / JCM 14847 / LMG 12228 / 1C / PRS 101 / PAO1</strain>
    </source>
</reference>
<reference key="3">
    <citation type="submission" date="2011-03" db="PDB data bank">
        <title>High resolution structure of DapA (PA1010) from Pseudomonas aeruginosa PAO1.</title>
        <authorList>
            <person name="Schnell R."/>
            <person name="Sandalova T."/>
            <person name="Schneider G."/>
        </authorList>
    </citation>
    <scope>X-RAY CRYSTALLOGRAPHY (1.59 ANGSTROMS)</scope>
    <source>
        <strain>ATCC 15692 / DSM 22644 / CIP 104116 / JCM 14847 / LMG 12228 / 1C / PRS 101 / PAO1</strain>
    </source>
</reference>
<reference key="4">
    <citation type="submission" date="2011-05" db="PDB data bank">
        <title>Structure of dihydrodipicolinate synthase complexed with 3-hydroxypropanoic acid (HPA) at 2.70 A resolution.</title>
        <authorList>
            <person name="Kumar M."/>
            <person name="Kaur N."/>
            <person name="Kumar S."/>
            <person name="Sinha M."/>
            <person name="Kaur P."/>
            <person name="Sharma S."/>
            <person name="Singh T.P."/>
        </authorList>
    </citation>
    <scope>X-RAY CRYSTALLOGRAPHY (2.70 ANGSTROMS)</scope>
</reference>